<evidence type="ECO:0000255" key="1">
    <source>
        <dbReference type="HAMAP-Rule" id="MF_01589"/>
    </source>
</evidence>
<accession>A4SPN7</accession>
<feature type="chain" id="PRO_0000314309" description="Carboxy-S-adenosyl-L-methionine synthase">
    <location>
        <begin position="1"/>
        <end position="247"/>
    </location>
</feature>
<feature type="binding site" evidence="1">
    <location>
        <position position="39"/>
    </location>
    <ligand>
        <name>S-adenosyl-L-methionine</name>
        <dbReference type="ChEBI" id="CHEBI:59789"/>
    </ligand>
</feature>
<feature type="binding site" evidence="1">
    <location>
        <begin position="64"/>
        <end position="66"/>
    </location>
    <ligand>
        <name>S-adenosyl-L-methionine</name>
        <dbReference type="ChEBI" id="CHEBI:59789"/>
    </ligand>
</feature>
<feature type="binding site" evidence="1">
    <location>
        <begin position="117"/>
        <end position="118"/>
    </location>
    <ligand>
        <name>S-adenosyl-L-methionine</name>
        <dbReference type="ChEBI" id="CHEBI:59789"/>
    </ligand>
</feature>
<feature type="binding site" evidence="1">
    <location>
        <position position="132"/>
    </location>
    <ligand>
        <name>S-adenosyl-L-methionine</name>
        <dbReference type="ChEBI" id="CHEBI:59789"/>
    </ligand>
</feature>
<feature type="binding site" evidence="1">
    <location>
        <position position="199"/>
    </location>
    <ligand>
        <name>S-adenosyl-L-methionine</name>
        <dbReference type="ChEBI" id="CHEBI:59789"/>
    </ligand>
</feature>
<protein>
    <recommendedName>
        <fullName evidence="1">Carboxy-S-adenosyl-L-methionine synthase</fullName>
        <shortName evidence="1">Cx-SAM synthase</shortName>
        <ecNumber evidence="1">2.1.3.-</ecNumber>
    </recommendedName>
</protein>
<comment type="function">
    <text evidence="1">Catalyzes the conversion of S-adenosyl-L-methionine (SAM) to carboxy-S-adenosyl-L-methionine (Cx-SAM).</text>
</comment>
<comment type="catalytic activity">
    <reaction evidence="1">
        <text>prephenate + S-adenosyl-L-methionine = carboxy-S-adenosyl-L-methionine + 3-phenylpyruvate + H2O</text>
        <dbReference type="Rhea" id="RHEA:51692"/>
        <dbReference type="ChEBI" id="CHEBI:15377"/>
        <dbReference type="ChEBI" id="CHEBI:18005"/>
        <dbReference type="ChEBI" id="CHEBI:29934"/>
        <dbReference type="ChEBI" id="CHEBI:59789"/>
        <dbReference type="ChEBI" id="CHEBI:134278"/>
    </reaction>
</comment>
<comment type="subunit">
    <text evidence="1">Homodimer.</text>
</comment>
<comment type="similarity">
    <text evidence="1">Belongs to the class I-like SAM-binding methyltransferase superfamily. Cx-SAM synthase family.</text>
</comment>
<sequence>MHTKDQIFAAPIARLGDFCFDEQVVDVFPDMIQRSVPGYSNIISAIGMMAARYAQPQSRLYDLGCSLGAATQAMRRHLTQPGCHITAVDLSHPMIERARAHLSGFKSEVPVALVEADICDIAIENASVVVLNFTLQFVDPEKRMALIQRIFDGLRPGGILILSEKFRFEDEPVNDLLIELHLDFKRANGYSELEISQKRNALENVMRTDSLETHRSRLQSAGFVHQDLWFQCFNFGSMIAIKSSDAN</sequence>
<gene>
    <name evidence="1" type="primary">cmoA</name>
    <name type="ordered locus">ASA_2846</name>
</gene>
<dbReference type="EC" id="2.1.3.-" evidence="1"/>
<dbReference type="EMBL" id="CP000644">
    <property type="protein sequence ID" value="ABO90859.1"/>
    <property type="molecule type" value="Genomic_DNA"/>
</dbReference>
<dbReference type="RefSeq" id="WP_005313097.1">
    <property type="nucleotide sequence ID" value="NC_009348.1"/>
</dbReference>
<dbReference type="SMR" id="A4SPN7"/>
<dbReference type="STRING" id="29491.GCA_000820065_02218"/>
<dbReference type="KEGG" id="asa:ASA_2846"/>
<dbReference type="eggNOG" id="COG4106">
    <property type="taxonomic scope" value="Bacteria"/>
</dbReference>
<dbReference type="HOGENOM" id="CLU_078475_0_0_6"/>
<dbReference type="Proteomes" id="UP000000225">
    <property type="component" value="Chromosome"/>
</dbReference>
<dbReference type="GO" id="GO:0016743">
    <property type="term" value="F:carboxyl- or carbamoyltransferase activity"/>
    <property type="evidence" value="ECO:0007669"/>
    <property type="project" value="UniProtKB-UniRule"/>
</dbReference>
<dbReference type="GO" id="GO:1904047">
    <property type="term" value="F:S-adenosyl-L-methionine binding"/>
    <property type="evidence" value="ECO:0007669"/>
    <property type="project" value="UniProtKB-UniRule"/>
</dbReference>
<dbReference type="GO" id="GO:0002098">
    <property type="term" value="P:tRNA wobble uridine modification"/>
    <property type="evidence" value="ECO:0007669"/>
    <property type="project" value="InterPro"/>
</dbReference>
<dbReference type="CDD" id="cd02440">
    <property type="entry name" value="AdoMet_MTases"/>
    <property type="match status" value="1"/>
</dbReference>
<dbReference type="Gene3D" id="3.40.50.150">
    <property type="entry name" value="Vaccinia Virus protein VP39"/>
    <property type="match status" value="1"/>
</dbReference>
<dbReference type="HAMAP" id="MF_01589">
    <property type="entry name" value="Cx_SAM_synthase"/>
    <property type="match status" value="1"/>
</dbReference>
<dbReference type="InterPro" id="IPR005271">
    <property type="entry name" value="CmoA"/>
</dbReference>
<dbReference type="InterPro" id="IPR041698">
    <property type="entry name" value="Methyltransf_25"/>
</dbReference>
<dbReference type="InterPro" id="IPR029063">
    <property type="entry name" value="SAM-dependent_MTases_sf"/>
</dbReference>
<dbReference type="NCBIfam" id="TIGR00740">
    <property type="entry name" value="carboxy-S-adenosyl-L-methionine synthase CmoA"/>
    <property type="match status" value="1"/>
</dbReference>
<dbReference type="NCBIfam" id="NF011995">
    <property type="entry name" value="PRK15451.1"/>
    <property type="match status" value="1"/>
</dbReference>
<dbReference type="PANTHER" id="PTHR43861:SF2">
    <property type="entry name" value="CARBOXY-S-ADENOSYL-L-METHIONINE SYNTHASE"/>
    <property type="match status" value="1"/>
</dbReference>
<dbReference type="PANTHER" id="PTHR43861">
    <property type="entry name" value="TRANS-ACONITATE 2-METHYLTRANSFERASE-RELATED"/>
    <property type="match status" value="1"/>
</dbReference>
<dbReference type="Pfam" id="PF13649">
    <property type="entry name" value="Methyltransf_25"/>
    <property type="match status" value="1"/>
</dbReference>
<dbReference type="PIRSF" id="PIRSF006325">
    <property type="entry name" value="MeTrfase_bac"/>
    <property type="match status" value="1"/>
</dbReference>
<dbReference type="SUPFAM" id="SSF53335">
    <property type="entry name" value="S-adenosyl-L-methionine-dependent methyltransferases"/>
    <property type="match status" value="1"/>
</dbReference>
<name>CMOA_AERS4</name>
<reference key="1">
    <citation type="journal article" date="2008" name="BMC Genomics">
        <title>The genome of Aeromonas salmonicida subsp. salmonicida A449: insights into the evolution of a fish pathogen.</title>
        <authorList>
            <person name="Reith M.E."/>
            <person name="Singh R.K."/>
            <person name="Curtis B."/>
            <person name="Boyd J.M."/>
            <person name="Bouevitch A."/>
            <person name="Kimball J."/>
            <person name="Munholland J."/>
            <person name="Murphy C."/>
            <person name="Sarty D."/>
            <person name="Williams J."/>
            <person name="Nash J.H."/>
            <person name="Johnson S.C."/>
            <person name="Brown L.L."/>
        </authorList>
    </citation>
    <scope>NUCLEOTIDE SEQUENCE [LARGE SCALE GENOMIC DNA]</scope>
    <source>
        <strain>A449</strain>
    </source>
</reference>
<proteinExistence type="inferred from homology"/>
<keyword id="KW-0949">S-adenosyl-L-methionine</keyword>
<keyword id="KW-0808">Transferase</keyword>
<organism>
    <name type="scientific">Aeromonas salmonicida (strain A449)</name>
    <dbReference type="NCBI Taxonomy" id="382245"/>
    <lineage>
        <taxon>Bacteria</taxon>
        <taxon>Pseudomonadati</taxon>
        <taxon>Pseudomonadota</taxon>
        <taxon>Gammaproteobacteria</taxon>
        <taxon>Aeromonadales</taxon>
        <taxon>Aeromonadaceae</taxon>
        <taxon>Aeromonas</taxon>
    </lineage>
</organism>